<organism>
    <name type="scientific">Scheffersomyces stipitis (strain ATCC 58785 / CBS 6054 / NBRC 10063 / NRRL Y-11545)</name>
    <name type="common">Yeast</name>
    <name type="synonym">Pichia stipitis</name>
    <dbReference type="NCBI Taxonomy" id="322104"/>
    <lineage>
        <taxon>Eukaryota</taxon>
        <taxon>Fungi</taxon>
        <taxon>Dikarya</taxon>
        <taxon>Ascomycota</taxon>
        <taxon>Saccharomycotina</taxon>
        <taxon>Pichiomycetes</taxon>
        <taxon>Debaryomycetaceae</taxon>
        <taxon>Scheffersomyces</taxon>
    </lineage>
</organism>
<feature type="chain" id="PRO_0000292502" description="Class E vacuolar protein-sorting machinery protein HSE1">
    <location>
        <begin position="1"/>
        <end position="475"/>
    </location>
</feature>
<feature type="domain" description="VHS" evidence="4">
    <location>
        <begin position="19"/>
        <end position="149"/>
    </location>
</feature>
<feature type="domain" description="UIM" evidence="3">
    <location>
        <begin position="168"/>
        <end position="187"/>
    </location>
</feature>
<feature type="domain" description="SH3" evidence="2">
    <location>
        <begin position="220"/>
        <end position="280"/>
    </location>
</feature>
<feature type="region of interest" description="Disordered" evidence="5">
    <location>
        <begin position="145"/>
        <end position="171"/>
    </location>
</feature>
<feature type="region of interest" description="Disordered" evidence="5">
    <location>
        <begin position="189"/>
        <end position="219"/>
    </location>
</feature>
<feature type="region of interest" description="Disordered" evidence="5">
    <location>
        <begin position="434"/>
        <end position="475"/>
    </location>
</feature>
<feature type="compositionally biased region" description="Low complexity" evidence="5">
    <location>
        <begin position="442"/>
        <end position="458"/>
    </location>
</feature>
<feature type="compositionally biased region" description="Polar residues" evidence="5">
    <location>
        <begin position="459"/>
        <end position="468"/>
    </location>
</feature>
<name>HSE1_PICST</name>
<reference key="1">
    <citation type="journal article" date="2007" name="Nat. Biotechnol.">
        <title>Genome sequence of the lignocellulose-bioconverting and xylose-fermenting yeast Pichia stipitis.</title>
        <authorList>
            <person name="Jeffries T.W."/>
            <person name="Grigoriev I.V."/>
            <person name="Grimwood J."/>
            <person name="Laplaza J.M."/>
            <person name="Aerts A."/>
            <person name="Salamov A."/>
            <person name="Schmutz J."/>
            <person name="Lindquist E."/>
            <person name="Dehal P."/>
            <person name="Shapiro H."/>
            <person name="Jin Y.-S."/>
            <person name="Passoth V."/>
            <person name="Richardson P.M."/>
        </authorList>
    </citation>
    <scope>NUCLEOTIDE SEQUENCE [LARGE SCALE GENOMIC DNA]</scope>
    <source>
        <strain>ATCC 58785 / CBS 6054 / NBRC 10063 / NRRL Y-11545</strain>
    </source>
</reference>
<sequence>MYKAKKTTDSSLESLIKRATDETLTTNNWEYIIAVCDKVKSDPEVATKKAITILTTRLQSKDANVLLRTLSLIIALGENCGSRMQQEIASEAFLKPLTKKLKEKKLHETVKVEIAKLIEQLHQSFKSDPSLKPMSDAYNKIKQEHPRYLERNVPAKPEKHDVSSKTQSEEDELQRVINLSLQEYEREQFSKSLQKPLPDPKKTSPRNANIAQEDSDDKKPEISKVRAMFDLVSHEKDELSFRKGDLINVIEVVYRDWWRGSLPTGEVGIFPLNYVAPVYAKSSDQIEKELQIENRLLNVESKKIDKVLAMLSAATNGNENIDDEELENLYGQVSGLRSQLGHLIMKHTQREKELKLLNEQLAIEDKAFHDLLDKSISSFSNRNSYISSDVVPYPTGGNGSVNSGYPAVPNAYSGYNTYNGNGTPLAMQPTSLGFGNSIYASQPQQQPPRQVSQQMPPQDYQSYSNINSFPEVDRM</sequence>
<evidence type="ECO:0000250" key="1"/>
<evidence type="ECO:0000255" key="2">
    <source>
        <dbReference type="PROSITE-ProRule" id="PRU00192"/>
    </source>
</evidence>
<evidence type="ECO:0000255" key="3">
    <source>
        <dbReference type="PROSITE-ProRule" id="PRU00213"/>
    </source>
</evidence>
<evidence type="ECO:0000255" key="4">
    <source>
        <dbReference type="PROSITE-ProRule" id="PRU00218"/>
    </source>
</evidence>
<evidence type="ECO:0000256" key="5">
    <source>
        <dbReference type="SAM" id="MobiDB-lite"/>
    </source>
</evidence>
<evidence type="ECO:0000305" key="6"/>
<gene>
    <name type="primary">HSE1</name>
    <name type="ORF">PICST_32905</name>
</gene>
<accession>A3LXQ8</accession>
<dbReference type="EMBL" id="CP000500">
    <property type="protein sequence ID" value="ABN67508.2"/>
    <property type="molecule type" value="Genomic_DNA"/>
</dbReference>
<dbReference type="RefSeq" id="XP_001385537.2">
    <property type="nucleotide sequence ID" value="XM_001385500.1"/>
</dbReference>
<dbReference type="SMR" id="A3LXQ8"/>
<dbReference type="FunCoup" id="A3LXQ8">
    <property type="interactions" value="362"/>
</dbReference>
<dbReference type="STRING" id="322104.A3LXQ8"/>
<dbReference type="GeneID" id="4840070"/>
<dbReference type="KEGG" id="pic:PICST_32905"/>
<dbReference type="eggNOG" id="KOG2199">
    <property type="taxonomic scope" value="Eukaryota"/>
</dbReference>
<dbReference type="HOGENOM" id="CLU_010104_2_0_1"/>
<dbReference type="InParanoid" id="A3LXQ8"/>
<dbReference type="OMA" id="QVYRDWW"/>
<dbReference type="OrthoDB" id="10255964at2759"/>
<dbReference type="Proteomes" id="UP000002258">
    <property type="component" value="Chromosome 6"/>
</dbReference>
<dbReference type="GO" id="GO:0010008">
    <property type="term" value="C:endosome membrane"/>
    <property type="evidence" value="ECO:0007669"/>
    <property type="project" value="UniProtKB-SubCell"/>
</dbReference>
<dbReference type="GO" id="GO:0033565">
    <property type="term" value="C:ESCRT-0 complex"/>
    <property type="evidence" value="ECO:0007669"/>
    <property type="project" value="EnsemblFungi"/>
</dbReference>
<dbReference type="GO" id="GO:0005774">
    <property type="term" value="C:vacuolar membrane"/>
    <property type="evidence" value="ECO:0007669"/>
    <property type="project" value="EnsemblFungi"/>
</dbReference>
<dbReference type="GO" id="GO:0035091">
    <property type="term" value="F:phosphatidylinositol binding"/>
    <property type="evidence" value="ECO:0007669"/>
    <property type="project" value="InterPro"/>
</dbReference>
<dbReference type="GO" id="GO:0019904">
    <property type="term" value="F:protein domain specific binding"/>
    <property type="evidence" value="ECO:0007669"/>
    <property type="project" value="EnsemblFungi"/>
</dbReference>
<dbReference type="GO" id="GO:0046982">
    <property type="term" value="F:protein heterodimerization activity"/>
    <property type="evidence" value="ECO:0007669"/>
    <property type="project" value="EnsemblFungi"/>
</dbReference>
<dbReference type="GO" id="GO:0043130">
    <property type="term" value="F:ubiquitin binding"/>
    <property type="evidence" value="ECO:0007669"/>
    <property type="project" value="EnsemblFungi"/>
</dbReference>
<dbReference type="GO" id="GO:1904669">
    <property type="term" value="P:ATP export"/>
    <property type="evidence" value="ECO:0007669"/>
    <property type="project" value="EnsemblFungi"/>
</dbReference>
<dbReference type="GO" id="GO:0016237">
    <property type="term" value="P:microautophagy"/>
    <property type="evidence" value="ECO:0007669"/>
    <property type="project" value="EnsemblFungi"/>
</dbReference>
<dbReference type="GO" id="GO:1903319">
    <property type="term" value="P:positive regulation of protein maturation"/>
    <property type="evidence" value="ECO:0007669"/>
    <property type="project" value="EnsemblFungi"/>
</dbReference>
<dbReference type="GO" id="GO:0009306">
    <property type="term" value="P:protein secretion"/>
    <property type="evidence" value="ECO:0007669"/>
    <property type="project" value="EnsemblFungi"/>
</dbReference>
<dbReference type="GO" id="GO:0006623">
    <property type="term" value="P:protein targeting to vacuole"/>
    <property type="evidence" value="ECO:0007669"/>
    <property type="project" value="EnsemblFungi"/>
</dbReference>
<dbReference type="GO" id="GO:0043328">
    <property type="term" value="P:protein transport to vacuole involved in ubiquitin-dependent protein catabolic process via the multivesicular body sorting pathway"/>
    <property type="evidence" value="ECO:0007669"/>
    <property type="project" value="TreeGrafter"/>
</dbReference>
<dbReference type="CDD" id="cd21386">
    <property type="entry name" value="GAT_Hse1"/>
    <property type="match status" value="1"/>
</dbReference>
<dbReference type="CDD" id="cd16978">
    <property type="entry name" value="VHS_HSE1"/>
    <property type="match status" value="1"/>
</dbReference>
<dbReference type="Gene3D" id="1.20.5.1940">
    <property type="match status" value="1"/>
</dbReference>
<dbReference type="Gene3D" id="1.25.40.90">
    <property type="match status" value="1"/>
</dbReference>
<dbReference type="Gene3D" id="2.30.30.40">
    <property type="entry name" value="SH3 Domains"/>
    <property type="match status" value="1"/>
</dbReference>
<dbReference type="InterPro" id="IPR008942">
    <property type="entry name" value="ENTH_VHS"/>
</dbReference>
<dbReference type="InterPro" id="IPR036028">
    <property type="entry name" value="SH3-like_dom_sf"/>
</dbReference>
<dbReference type="InterPro" id="IPR001452">
    <property type="entry name" value="SH3_domain"/>
</dbReference>
<dbReference type="InterPro" id="IPR050670">
    <property type="entry name" value="STAM"/>
</dbReference>
<dbReference type="InterPro" id="IPR003903">
    <property type="entry name" value="UIM_dom"/>
</dbReference>
<dbReference type="InterPro" id="IPR002014">
    <property type="entry name" value="VHS_dom"/>
</dbReference>
<dbReference type="PANTHER" id="PTHR45929">
    <property type="entry name" value="JAK PATHWAY SIGNAL TRANSDUCTION ADAPTOR MOLECULE"/>
    <property type="match status" value="1"/>
</dbReference>
<dbReference type="PANTHER" id="PTHR45929:SF3">
    <property type="entry name" value="JAK PATHWAY SIGNAL TRANSDUCTION ADAPTOR MOLECULE"/>
    <property type="match status" value="1"/>
</dbReference>
<dbReference type="Pfam" id="PF00018">
    <property type="entry name" value="SH3_1"/>
    <property type="match status" value="1"/>
</dbReference>
<dbReference type="Pfam" id="PF02809">
    <property type="entry name" value="UIM"/>
    <property type="match status" value="1"/>
</dbReference>
<dbReference type="Pfam" id="PF00790">
    <property type="entry name" value="VHS"/>
    <property type="match status" value="1"/>
</dbReference>
<dbReference type="PRINTS" id="PR00452">
    <property type="entry name" value="SH3DOMAIN"/>
</dbReference>
<dbReference type="SMART" id="SM00326">
    <property type="entry name" value="SH3"/>
    <property type="match status" value="1"/>
</dbReference>
<dbReference type="SMART" id="SM00288">
    <property type="entry name" value="VHS"/>
    <property type="match status" value="1"/>
</dbReference>
<dbReference type="SUPFAM" id="SSF48464">
    <property type="entry name" value="ENTH/VHS domain"/>
    <property type="match status" value="1"/>
</dbReference>
<dbReference type="SUPFAM" id="SSF50044">
    <property type="entry name" value="SH3-domain"/>
    <property type="match status" value="1"/>
</dbReference>
<dbReference type="PROSITE" id="PS50002">
    <property type="entry name" value="SH3"/>
    <property type="match status" value="1"/>
</dbReference>
<dbReference type="PROSITE" id="PS50330">
    <property type="entry name" value="UIM"/>
    <property type="match status" value="1"/>
</dbReference>
<dbReference type="PROSITE" id="PS50179">
    <property type="entry name" value="VHS"/>
    <property type="match status" value="1"/>
</dbReference>
<protein>
    <recommendedName>
        <fullName>Class E vacuolar protein-sorting machinery protein HSE1</fullName>
    </recommendedName>
</protein>
<proteinExistence type="inferred from homology"/>
<comment type="function">
    <text evidence="1">Component of the ESCRT-0 complex which is the sorting receptor for ubiquitinated cargo proteins at the multivesicular body (MVB).</text>
</comment>
<comment type="subunit">
    <text evidence="1">Component of the ESCRT-0 complex composed of HSE1 and VPS27.</text>
</comment>
<comment type="subcellular location">
    <subcellularLocation>
        <location evidence="1">Endosome membrane</location>
        <topology evidence="1">Peripheral membrane protein</topology>
        <orientation evidence="1">Cytoplasmic side</orientation>
    </subcellularLocation>
</comment>
<comment type="similarity">
    <text evidence="6">Belongs to the STAM family.</text>
</comment>
<keyword id="KW-0967">Endosome</keyword>
<keyword id="KW-0472">Membrane</keyword>
<keyword id="KW-0653">Protein transport</keyword>
<keyword id="KW-1185">Reference proteome</keyword>
<keyword id="KW-0728">SH3 domain</keyword>
<keyword id="KW-0813">Transport</keyword>